<organism>
    <name type="scientific">Acrosternum hilare</name>
    <name type="common">Green stink bug</name>
    <name type="synonym">Nezara hilaris</name>
    <dbReference type="NCBI Taxonomy" id="244443"/>
    <lineage>
        <taxon>Eukaryota</taxon>
        <taxon>Metazoa</taxon>
        <taxon>Ecdysozoa</taxon>
        <taxon>Arthropoda</taxon>
        <taxon>Hexapoda</taxon>
        <taxon>Insecta</taxon>
        <taxon>Pterygota</taxon>
        <taxon>Neoptera</taxon>
        <taxon>Paraneoptera</taxon>
        <taxon>Hemiptera</taxon>
        <taxon>Heteroptera</taxon>
        <taxon>Panheteroptera</taxon>
        <taxon>Pentatomomorpha</taxon>
        <taxon>Pentatomoidea</taxon>
        <taxon>Pentatomidae</taxon>
        <taxon>Pentatominae</taxon>
        <taxon>Acrosternum</taxon>
    </lineage>
</organism>
<sequence length="10" mass="1084">APSMGFMGMR</sequence>
<accession>P86562</accession>
<proteinExistence type="evidence at protein level"/>
<comment type="subcellular location">
    <subcellularLocation>
        <location evidence="1 3">Secreted</location>
    </subcellularLocation>
</comment>
<comment type="tissue specificity">
    <text evidence="1">Expressed in the antennal lobe (at protein level).</text>
</comment>
<evidence type="ECO:0000269" key="1">
    <source>
    </source>
</evidence>
<evidence type="ECO:0000303" key="2">
    <source>
    </source>
</evidence>
<evidence type="ECO:0000305" key="3"/>
<keyword id="KW-0027">Amidation</keyword>
<keyword id="KW-0903">Direct protein sequencing</keyword>
<keyword id="KW-0527">Neuropeptide</keyword>
<keyword id="KW-0964">Secreted</keyword>
<dbReference type="GO" id="GO:0005576">
    <property type="term" value="C:extracellular region"/>
    <property type="evidence" value="ECO:0007005"/>
    <property type="project" value="UniProtKB"/>
</dbReference>
<dbReference type="GO" id="GO:0007218">
    <property type="term" value="P:neuropeptide signaling pathway"/>
    <property type="evidence" value="ECO:0007669"/>
    <property type="project" value="UniProtKB-KW"/>
</dbReference>
<reference evidence="3" key="1">
    <citation type="journal article" date="2009" name="Peptides">
        <title>Neuropeptides in Heteroptera: identification of allatotropin-related peptide and tachykinin-related peptides using MALDI-TOF mass spectrometry.</title>
        <authorList>
            <person name="Neupert S."/>
            <person name="Russell W.K."/>
            <person name="Russell D.H."/>
            <person name="Lopez J.D. Jr."/>
            <person name="Predel R."/>
            <person name="Nachman R.J."/>
        </authorList>
    </citation>
    <scope>PROTEIN SEQUENCE</scope>
    <scope>SUBCELLULAR LOCATION</scope>
    <scope>TISSUE SPECIFICITY</scope>
    <scope>AMIDATION AT ARG-10</scope>
    <source>
        <tissue evidence="1">Antennal lobe</tissue>
    </source>
</reference>
<name>TRP6_ACRHI</name>
<feature type="peptide" id="PRO_0000395631" description="Tachykinin-related peptide 6" evidence="1">
    <location>
        <begin position="1"/>
        <end position="10"/>
    </location>
</feature>
<feature type="modified residue" description="Arginine amide" evidence="1">
    <location>
        <position position="10"/>
    </location>
</feature>
<protein>
    <recommendedName>
        <fullName evidence="2">Tachykinin-related peptide 6</fullName>
        <shortName evidence="2">TKRP-6</shortName>
    </recommendedName>
</protein>